<organism>
    <name type="scientific">Xanthomonas oryzae pv. oryzae (strain MAFF 311018)</name>
    <dbReference type="NCBI Taxonomy" id="342109"/>
    <lineage>
        <taxon>Bacteria</taxon>
        <taxon>Pseudomonadati</taxon>
        <taxon>Pseudomonadota</taxon>
        <taxon>Gammaproteobacteria</taxon>
        <taxon>Lysobacterales</taxon>
        <taxon>Lysobacteraceae</taxon>
        <taxon>Xanthomonas</taxon>
    </lineage>
</organism>
<accession>Q2P8W4</accession>
<evidence type="ECO:0000255" key="1">
    <source>
        <dbReference type="HAMAP-Rule" id="MF_00612"/>
    </source>
</evidence>
<reference key="1">
    <citation type="journal article" date="2005" name="Jpn. Agric. Res. Q.">
        <title>Genome sequence of Xanthomonas oryzae pv. oryzae suggests contribution of large numbers of effector genes and insertion sequences to its race diversity.</title>
        <authorList>
            <person name="Ochiai H."/>
            <person name="Inoue Y."/>
            <person name="Takeya M."/>
            <person name="Sasaki A."/>
            <person name="Kaku H."/>
        </authorList>
    </citation>
    <scope>NUCLEOTIDE SEQUENCE [LARGE SCALE GENOMIC DNA]</scope>
    <source>
        <strain>MAFF 311018</strain>
    </source>
</reference>
<protein>
    <recommendedName>
        <fullName evidence="1">UPF0225 protein XOO0258</fullName>
    </recommendedName>
</protein>
<name>Y258_XANOM</name>
<gene>
    <name type="ordered locus">XOO0258</name>
</gene>
<feature type="chain" id="PRO_1000056747" description="UPF0225 protein XOO0258">
    <location>
        <begin position="1"/>
        <end position="129"/>
    </location>
</feature>
<comment type="similarity">
    <text evidence="1">Belongs to the UPF0225 family.</text>
</comment>
<sequence>MPTSMPNDPCPCGRPADYARCCGPYHAGAAAPDAETLMRARYSAHVRRDAAYLLASWHPSTRPGELSLDEGGRTTWLGLTVQRTLETGPETAEVVFLARYRIGGGSAVRMTEHSRFVRDAGRWYYLDAR</sequence>
<dbReference type="EMBL" id="AP008229">
    <property type="protein sequence ID" value="BAE67013.1"/>
    <property type="molecule type" value="Genomic_DNA"/>
</dbReference>
<dbReference type="RefSeq" id="WP_011257241.1">
    <property type="nucleotide sequence ID" value="NC_007705.1"/>
</dbReference>
<dbReference type="SMR" id="Q2P8W4"/>
<dbReference type="KEGG" id="xom:XOO0258"/>
<dbReference type="HOGENOM" id="CLU_099590_2_0_6"/>
<dbReference type="Gene3D" id="3.10.450.50">
    <property type="match status" value="1"/>
</dbReference>
<dbReference type="HAMAP" id="MF_00612">
    <property type="entry name" value="UPF0225"/>
    <property type="match status" value="1"/>
</dbReference>
<dbReference type="InterPro" id="IPR032710">
    <property type="entry name" value="NTF2-like_dom_sf"/>
</dbReference>
<dbReference type="InterPro" id="IPR004027">
    <property type="entry name" value="SEC_C_motif"/>
</dbReference>
<dbReference type="InterPro" id="IPR023006">
    <property type="entry name" value="UPF0225"/>
</dbReference>
<dbReference type="InterPro" id="IPR048469">
    <property type="entry name" value="YchJ-like_M"/>
</dbReference>
<dbReference type="NCBIfam" id="NF003262">
    <property type="entry name" value="PRK04233.1"/>
    <property type="match status" value="1"/>
</dbReference>
<dbReference type="PANTHER" id="PTHR33747:SF1">
    <property type="entry name" value="ADENYLATE CYCLASE-ASSOCIATED CAP C-TERMINAL DOMAIN-CONTAINING PROTEIN"/>
    <property type="match status" value="1"/>
</dbReference>
<dbReference type="PANTHER" id="PTHR33747">
    <property type="entry name" value="UPF0225 PROTEIN SCO1677"/>
    <property type="match status" value="1"/>
</dbReference>
<dbReference type="Pfam" id="PF02810">
    <property type="entry name" value="SEC-C"/>
    <property type="match status" value="1"/>
</dbReference>
<dbReference type="Pfam" id="PF17775">
    <property type="entry name" value="YchJ_M-like"/>
    <property type="match status" value="1"/>
</dbReference>
<dbReference type="SUPFAM" id="SSF54427">
    <property type="entry name" value="NTF2-like"/>
    <property type="match status" value="1"/>
</dbReference>
<proteinExistence type="inferred from homology"/>